<gene>
    <name evidence="1" type="primary">thiE</name>
    <name type="ordered locus">MXAN_5087</name>
</gene>
<name>THIE_MYXXD</name>
<sequence>MNAPSRPHLPRGPYLLCDDSVLPEISLVDKAARLVAGGARLVQLRMKRTPIREALAATRQVVALCRREGALCLVNDRVDLALLADADGVHVGDEDVPAEDARALLGPGRLVGVTVRDVVGARAAQAAGADYVGLGPVFPTSTKQVPAPVLGLEAFASVVRDSPLPVVGIGGVGLVNIASVAAAGAHCAAVVSDALLAADITERVRRLVEAFEQGRFGA</sequence>
<comment type="function">
    <text evidence="1">Condenses 4-methyl-5-(beta-hydroxyethyl)thiazole monophosphate (THZ-P) and 2-methyl-4-amino-5-hydroxymethyl pyrimidine pyrophosphate (HMP-PP) to form thiamine monophosphate (TMP).</text>
</comment>
<comment type="catalytic activity">
    <reaction evidence="1">
        <text>2-[(2R,5Z)-2-carboxy-4-methylthiazol-5(2H)-ylidene]ethyl phosphate + 4-amino-2-methyl-5-(diphosphooxymethyl)pyrimidine + 2 H(+) = thiamine phosphate + CO2 + diphosphate</text>
        <dbReference type="Rhea" id="RHEA:47844"/>
        <dbReference type="ChEBI" id="CHEBI:15378"/>
        <dbReference type="ChEBI" id="CHEBI:16526"/>
        <dbReference type="ChEBI" id="CHEBI:33019"/>
        <dbReference type="ChEBI" id="CHEBI:37575"/>
        <dbReference type="ChEBI" id="CHEBI:57841"/>
        <dbReference type="ChEBI" id="CHEBI:62899"/>
        <dbReference type="EC" id="2.5.1.3"/>
    </reaction>
</comment>
<comment type="catalytic activity">
    <reaction evidence="1">
        <text>2-(2-carboxy-4-methylthiazol-5-yl)ethyl phosphate + 4-amino-2-methyl-5-(diphosphooxymethyl)pyrimidine + 2 H(+) = thiamine phosphate + CO2 + diphosphate</text>
        <dbReference type="Rhea" id="RHEA:47848"/>
        <dbReference type="ChEBI" id="CHEBI:15378"/>
        <dbReference type="ChEBI" id="CHEBI:16526"/>
        <dbReference type="ChEBI" id="CHEBI:33019"/>
        <dbReference type="ChEBI" id="CHEBI:37575"/>
        <dbReference type="ChEBI" id="CHEBI:57841"/>
        <dbReference type="ChEBI" id="CHEBI:62890"/>
        <dbReference type="EC" id="2.5.1.3"/>
    </reaction>
</comment>
<comment type="catalytic activity">
    <reaction evidence="1">
        <text>4-methyl-5-(2-phosphooxyethyl)-thiazole + 4-amino-2-methyl-5-(diphosphooxymethyl)pyrimidine + H(+) = thiamine phosphate + diphosphate</text>
        <dbReference type="Rhea" id="RHEA:22328"/>
        <dbReference type="ChEBI" id="CHEBI:15378"/>
        <dbReference type="ChEBI" id="CHEBI:33019"/>
        <dbReference type="ChEBI" id="CHEBI:37575"/>
        <dbReference type="ChEBI" id="CHEBI:57841"/>
        <dbReference type="ChEBI" id="CHEBI:58296"/>
        <dbReference type="EC" id="2.5.1.3"/>
    </reaction>
</comment>
<comment type="cofactor">
    <cofactor evidence="1">
        <name>Mg(2+)</name>
        <dbReference type="ChEBI" id="CHEBI:18420"/>
    </cofactor>
    <text evidence="1">Binds 1 Mg(2+) ion per subunit.</text>
</comment>
<comment type="pathway">
    <text evidence="1">Cofactor biosynthesis; thiamine diphosphate biosynthesis; thiamine phosphate from 4-amino-2-methyl-5-diphosphomethylpyrimidine and 4-methyl-5-(2-phosphoethyl)-thiazole: step 1/1.</text>
</comment>
<comment type="similarity">
    <text evidence="1">Belongs to the thiamine-phosphate synthase family.</text>
</comment>
<feature type="chain" id="PRO_0000336414" description="Thiamine-phosphate synthase">
    <location>
        <begin position="1"/>
        <end position="218"/>
    </location>
</feature>
<feature type="binding site" evidence="1">
    <location>
        <begin position="43"/>
        <end position="47"/>
    </location>
    <ligand>
        <name>4-amino-2-methyl-5-(diphosphooxymethyl)pyrimidine</name>
        <dbReference type="ChEBI" id="CHEBI:57841"/>
    </ligand>
</feature>
<feature type="binding site" evidence="1">
    <location>
        <position position="75"/>
    </location>
    <ligand>
        <name>4-amino-2-methyl-5-(diphosphooxymethyl)pyrimidine</name>
        <dbReference type="ChEBI" id="CHEBI:57841"/>
    </ligand>
</feature>
<feature type="binding site" evidence="1">
    <location>
        <position position="76"/>
    </location>
    <ligand>
        <name>Mg(2+)</name>
        <dbReference type="ChEBI" id="CHEBI:18420"/>
    </ligand>
</feature>
<feature type="binding site" evidence="1">
    <location>
        <position position="95"/>
    </location>
    <ligand>
        <name>Mg(2+)</name>
        <dbReference type="ChEBI" id="CHEBI:18420"/>
    </ligand>
</feature>
<feature type="binding site" evidence="1">
    <location>
        <position position="114"/>
    </location>
    <ligand>
        <name>4-amino-2-methyl-5-(diphosphooxymethyl)pyrimidine</name>
        <dbReference type="ChEBI" id="CHEBI:57841"/>
    </ligand>
</feature>
<feature type="binding site" evidence="1">
    <location>
        <begin position="140"/>
        <end position="142"/>
    </location>
    <ligand>
        <name>2-[(2R,5Z)-2-carboxy-4-methylthiazol-5(2H)-ylidene]ethyl phosphate</name>
        <dbReference type="ChEBI" id="CHEBI:62899"/>
    </ligand>
</feature>
<feature type="binding site" evidence="1">
    <location>
        <position position="143"/>
    </location>
    <ligand>
        <name>4-amino-2-methyl-5-(diphosphooxymethyl)pyrimidine</name>
        <dbReference type="ChEBI" id="CHEBI:57841"/>
    </ligand>
</feature>
<feature type="binding site" evidence="1">
    <location>
        <position position="171"/>
    </location>
    <ligand>
        <name>2-[(2R,5Z)-2-carboxy-4-methylthiazol-5(2H)-ylidene]ethyl phosphate</name>
        <dbReference type="ChEBI" id="CHEBI:62899"/>
    </ligand>
</feature>
<feature type="binding site" evidence="1">
    <location>
        <begin position="191"/>
        <end position="192"/>
    </location>
    <ligand>
        <name>2-[(2R,5Z)-2-carboxy-4-methylthiazol-5(2H)-ylidene]ethyl phosphate</name>
        <dbReference type="ChEBI" id="CHEBI:62899"/>
    </ligand>
</feature>
<organism>
    <name type="scientific">Myxococcus xanthus (strain DK1622)</name>
    <dbReference type="NCBI Taxonomy" id="246197"/>
    <lineage>
        <taxon>Bacteria</taxon>
        <taxon>Pseudomonadati</taxon>
        <taxon>Myxococcota</taxon>
        <taxon>Myxococcia</taxon>
        <taxon>Myxococcales</taxon>
        <taxon>Cystobacterineae</taxon>
        <taxon>Myxococcaceae</taxon>
        <taxon>Myxococcus</taxon>
    </lineage>
</organism>
<evidence type="ECO:0000255" key="1">
    <source>
        <dbReference type="HAMAP-Rule" id="MF_00097"/>
    </source>
</evidence>
<accession>Q1D282</accession>
<dbReference type="EC" id="2.5.1.3" evidence="1"/>
<dbReference type="EMBL" id="CP000113">
    <property type="protein sequence ID" value="ABF88204.1"/>
    <property type="molecule type" value="Genomic_DNA"/>
</dbReference>
<dbReference type="RefSeq" id="WP_011555061.1">
    <property type="nucleotide sequence ID" value="NC_008095.1"/>
</dbReference>
<dbReference type="SMR" id="Q1D282"/>
<dbReference type="STRING" id="246197.MXAN_5087"/>
<dbReference type="EnsemblBacteria" id="ABF88204">
    <property type="protein sequence ID" value="ABF88204"/>
    <property type="gene ID" value="MXAN_5087"/>
</dbReference>
<dbReference type="GeneID" id="41362371"/>
<dbReference type="KEGG" id="mxa:MXAN_5087"/>
<dbReference type="eggNOG" id="COG0352">
    <property type="taxonomic scope" value="Bacteria"/>
</dbReference>
<dbReference type="HOGENOM" id="CLU_018272_3_2_7"/>
<dbReference type="OrthoDB" id="9810880at2"/>
<dbReference type="UniPathway" id="UPA00060">
    <property type="reaction ID" value="UER00141"/>
</dbReference>
<dbReference type="Proteomes" id="UP000002402">
    <property type="component" value="Chromosome"/>
</dbReference>
<dbReference type="GO" id="GO:0005737">
    <property type="term" value="C:cytoplasm"/>
    <property type="evidence" value="ECO:0007669"/>
    <property type="project" value="TreeGrafter"/>
</dbReference>
<dbReference type="GO" id="GO:0000287">
    <property type="term" value="F:magnesium ion binding"/>
    <property type="evidence" value="ECO:0007669"/>
    <property type="project" value="UniProtKB-UniRule"/>
</dbReference>
<dbReference type="GO" id="GO:0004789">
    <property type="term" value="F:thiamine-phosphate diphosphorylase activity"/>
    <property type="evidence" value="ECO:0007669"/>
    <property type="project" value="UniProtKB-UniRule"/>
</dbReference>
<dbReference type="GO" id="GO:0009228">
    <property type="term" value="P:thiamine biosynthetic process"/>
    <property type="evidence" value="ECO:0007669"/>
    <property type="project" value="UniProtKB-KW"/>
</dbReference>
<dbReference type="GO" id="GO:0009229">
    <property type="term" value="P:thiamine diphosphate biosynthetic process"/>
    <property type="evidence" value="ECO:0007669"/>
    <property type="project" value="UniProtKB-UniRule"/>
</dbReference>
<dbReference type="CDD" id="cd00564">
    <property type="entry name" value="TMP_TenI"/>
    <property type="match status" value="1"/>
</dbReference>
<dbReference type="Gene3D" id="3.20.20.70">
    <property type="entry name" value="Aldolase class I"/>
    <property type="match status" value="1"/>
</dbReference>
<dbReference type="HAMAP" id="MF_00097">
    <property type="entry name" value="TMP_synthase"/>
    <property type="match status" value="1"/>
</dbReference>
<dbReference type="InterPro" id="IPR013785">
    <property type="entry name" value="Aldolase_TIM"/>
</dbReference>
<dbReference type="InterPro" id="IPR036206">
    <property type="entry name" value="ThiamineP_synth_sf"/>
</dbReference>
<dbReference type="InterPro" id="IPR022998">
    <property type="entry name" value="ThiamineP_synth_TenI"/>
</dbReference>
<dbReference type="InterPro" id="IPR034291">
    <property type="entry name" value="TMP_synthase"/>
</dbReference>
<dbReference type="NCBIfam" id="TIGR00693">
    <property type="entry name" value="thiE"/>
    <property type="match status" value="1"/>
</dbReference>
<dbReference type="PANTHER" id="PTHR20857">
    <property type="entry name" value="THIAMINE-PHOSPHATE PYROPHOSPHORYLASE"/>
    <property type="match status" value="1"/>
</dbReference>
<dbReference type="PANTHER" id="PTHR20857:SF15">
    <property type="entry name" value="THIAMINE-PHOSPHATE SYNTHASE"/>
    <property type="match status" value="1"/>
</dbReference>
<dbReference type="Pfam" id="PF02581">
    <property type="entry name" value="TMP-TENI"/>
    <property type="match status" value="1"/>
</dbReference>
<dbReference type="SUPFAM" id="SSF51391">
    <property type="entry name" value="Thiamin phosphate synthase"/>
    <property type="match status" value="1"/>
</dbReference>
<keyword id="KW-0460">Magnesium</keyword>
<keyword id="KW-0479">Metal-binding</keyword>
<keyword id="KW-1185">Reference proteome</keyword>
<keyword id="KW-0784">Thiamine biosynthesis</keyword>
<keyword id="KW-0808">Transferase</keyword>
<proteinExistence type="inferred from homology"/>
<reference key="1">
    <citation type="journal article" date="2006" name="Proc. Natl. Acad. Sci. U.S.A.">
        <title>Evolution of sensory complexity recorded in a myxobacterial genome.</title>
        <authorList>
            <person name="Goldman B.S."/>
            <person name="Nierman W.C."/>
            <person name="Kaiser D."/>
            <person name="Slater S.C."/>
            <person name="Durkin A.S."/>
            <person name="Eisen J.A."/>
            <person name="Ronning C.M."/>
            <person name="Barbazuk W.B."/>
            <person name="Blanchard M."/>
            <person name="Field C."/>
            <person name="Halling C."/>
            <person name="Hinkle G."/>
            <person name="Iartchuk O."/>
            <person name="Kim H.S."/>
            <person name="Mackenzie C."/>
            <person name="Madupu R."/>
            <person name="Miller N."/>
            <person name="Shvartsbeyn A."/>
            <person name="Sullivan S.A."/>
            <person name="Vaudin M."/>
            <person name="Wiegand R."/>
            <person name="Kaplan H.B."/>
        </authorList>
    </citation>
    <scope>NUCLEOTIDE SEQUENCE [LARGE SCALE GENOMIC DNA]</scope>
    <source>
        <strain>DK1622</strain>
    </source>
</reference>
<protein>
    <recommendedName>
        <fullName evidence="1">Thiamine-phosphate synthase</fullName>
        <shortName evidence="1">TP synthase</shortName>
        <shortName evidence="1">TPS</shortName>
        <ecNumber evidence="1">2.5.1.3</ecNumber>
    </recommendedName>
    <alternativeName>
        <fullName evidence="1">Thiamine-phosphate pyrophosphorylase</fullName>
        <shortName evidence="1">TMP pyrophosphorylase</shortName>
        <shortName evidence="1">TMP-PPase</shortName>
    </alternativeName>
</protein>